<name>HBEGF_PIG</name>
<sequence>MKLLPSVVLKLFLAAVFSALVTGESLERLRRGLADGTSNLVSPTESTDQLLPPGGGRGREVLDLEEADLDLLRADFSSKPQALATPSKEERGKRKKKGKGLGKKRDPCLRKYKDFCIHGECKYVKELRAPSCICHPGYHGERCHGLSLPVKNRLYTYDHTTILAVVAVVLSSVCLLVIVGLLMFRYHRRGGYDVENEEKVKLGVTASH</sequence>
<proteinExistence type="evidence at transcript level"/>
<protein>
    <recommendedName>
        <fullName>Proheparin-binding EGF-like growth factor</fullName>
    </recommendedName>
    <component>
        <recommendedName>
            <fullName>Heparin-binding EGF-like growth factor</fullName>
            <shortName>HB-EGF</shortName>
            <shortName>HBEGF</shortName>
        </recommendedName>
    </component>
</protein>
<comment type="function">
    <text evidence="1">Growth factor that mediates its effects via EGFR, ERBB2 and ERBB4. Required for normal cardiac valve formation and normal heart function. Promotes smooth muscle cell proliferation. May be involved in macrophage-mediated cellular proliferation. It is mitogenic for fibroblasts, but not endothelial cells. It is able to bind EGF receptor/EGFR with higher affinity than EGF itself and is a far more potent mitogen for smooth muscle cells than EGF. Also acts as a diphtheria toxin receptor (By similarity).</text>
</comment>
<comment type="subunit">
    <text evidence="1">Interacts with FBLN1. Interacts with EGFR and ERBB4 (By similarity).</text>
</comment>
<comment type="subcellular location">
    <molecule>Heparin-binding EGF-like growth factor</molecule>
    <subcellularLocation>
        <location evidence="1">Secreted</location>
        <location evidence="1">Extracellular space</location>
    </subcellularLocation>
    <text evidence="1">Mature HB-EGF is released into the extracellular space and probably binds to a receptor.</text>
</comment>
<comment type="subcellular location">
    <molecule>Proheparin-binding EGF-like growth factor</molecule>
    <subcellularLocation>
        <location evidence="1">Cell membrane</location>
        <topology evidence="1">Single-pass type I membrane protein</topology>
    </subcellularLocation>
</comment>
<comment type="tissue specificity">
    <text>Macrophages, midbrain, cerebellum, hypothalamus, cerebral cortex, bulbourethral gland, lung, heart ventricle, kidney, skin, prostate, seminal vesicle, testis; at low levels in lymph node, thymus, spleen; not detected in pituitary, olfactory bulb, thyroid, duodenum, pancreas, liver, submaxillary gland.</text>
</comment>
<comment type="PTM">
    <text evidence="5">O-glycosylated.</text>
</comment>
<feature type="signal peptide" evidence="2">
    <location>
        <begin position="1"/>
        <end position="23"/>
    </location>
</feature>
<feature type="chain" id="PRO_0000302805" description="Proheparin-binding EGF-like growth factor">
    <location>
        <begin position="24"/>
        <end position="208"/>
    </location>
</feature>
<feature type="propeptide" id="PRO_0000007617" evidence="1">
    <location>
        <begin position="24"/>
        <end position="62"/>
    </location>
</feature>
<feature type="chain" id="PRO_0000007618" description="Heparin-binding EGF-like growth factor">
    <location>
        <begin position="63"/>
        <end position="148"/>
    </location>
</feature>
<feature type="propeptide" id="PRO_0000007619" description="C-terminal" evidence="2">
    <location>
        <begin position="149"/>
        <end position="208"/>
    </location>
</feature>
<feature type="topological domain" description="Extracellular" evidence="2">
    <location>
        <begin position="24"/>
        <end position="161"/>
    </location>
</feature>
<feature type="transmembrane region" description="Helical" evidence="2">
    <location>
        <begin position="162"/>
        <end position="182"/>
    </location>
</feature>
<feature type="topological domain" description="Cytoplasmic" evidence="2">
    <location>
        <begin position="183"/>
        <end position="208"/>
    </location>
</feature>
<feature type="domain" description="EGF-like" evidence="3">
    <location>
        <begin position="104"/>
        <end position="144"/>
    </location>
</feature>
<feature type="region of interest" description="Disordered" evidence="4">
    <location>
        <begin position="37"/>
        <end position="57"/>
    </location>
</feature>
<feature type="region of interest" description="Disordered" evidence="4">
    <location>
        <begin position="81"/>
        <end position="104"/>
    </location>
</feature>
<feature type="compositionally biased region" description="Polar residues" evidence="4">
    <location>
        <begin position="37"/>
        <end position="49"/>
    </location>
</feature>
<feature type="compositionally biased region" description="Basic residues" evidence="4">
    <location>
        <begin position="93"/>
        <end position="102"/>
    </location>
</feature>
<feature type="glycosylation site" description="O-linked (GalNAc...) threonine" evidence="1">
    <location>
        <position position="85"/>
    </location>
</feature>
<feature type="disulfide bond" evidence="3">
    <location>
        <begin position="108"/>
        <end position="121"/>
    </location>
</feature>
<feature type="disulfide bond" evidence="3">
    <location>
        <begin position="116"/>
        <end position="132"/>
    </location>
</feature>
<feature type="disulfide bond" evidence="3">
    <location>
        <begin position="134"/>
        <end position="143"/>
    </location>
</feature>
<evidence type="ECO:0000250" key="1"/>
<evidence type="ECO:0000255" key="2"/>
<evidence type="ECO:0000255" key="3">
    <source>
        <dbReference type="PROSITE-ProRule" id="PRU00076"/>
    </source>
</evidence>
<evidence type="ECO:0000256" key="4">
    <source>
        <dbReference type="SAM" id="MobiDB-lite"/>
    </source>
</evidence>
<evidence type="ECO:0000305" key="5"/>
<keyword id="KW-1003">Cell membrane</keyword>
<keyword id="KW-1015">Disulfide bond</keyword>
<keyword id="KW-0245">EGF-like domain</keyword>
<keyword id="KW-0325">Glycoprotein</keyword>
<keyword id="KW-0339">Growth factor</keyword>
<keyword id="KW-0358">Heparin-binding</keyword>
<keyword id="KW-0472">Membrane</keyword>
<keyword id="KW-1185">Reference proteome</keyword>
<keyword id="KW-0964">Secreted</keyword>
<keyword id="KW-0732">Signal</keyword>
<keyword id="KW-0812">Transmembrane</keyword>
<keyword id="KW-1133">Transmembrane helix</keyword>
<organism>
    <name type="scientific">Sus scrofa</name>
    <name type="common">Pig</name>
    <dbReference type="NCBI Taxonomy" id="9823"/>
    <lineage>
        <taxon>Eukaryota</taxon>
        <taxon>Metazoa</taxon>
        <taxon>Chordata</taxon>
        <taxon>Craniata</taxon>
        <taxon>Vertebrata</taxon>
        <taxon>Euteleostomi</taxon>
        <taxon>Mammalia</taxon>
        <taxon>Eutheria</taxon>
        <taxon>Laurasiatheria</taxon>
        <taxon>Artiodactyla</taxon>
        <taxon>Suina</taxon>
        <taxon>Suidae</taxon>
        <taxon>Sus</taxon>
    </lineage>
</organism>
<gene>
    <name type="primary">HBEGF</name>
    <name type="synonym">DTR</name>
    <name type="synonym">HEGFL</name>
</gene>
<accession>Q01580</accession>
<dbReference type="EMBL" id="Y15731">
    <property type="protein sequence ID" value="CAA75740.1"/>
    <property type="molecule type" value="mRNA"/>
</dbReference>
<dbReference type="EMBL" id="X67295">
    <property type="protein sequence ID" value="CAA47709.1"/>
    <property type="molecule type" value="mRNA"/>
</dbReference>
<dbReference type="PIR" id="S27162">
    <property type="entry name" value="S27162"/>
</dbReference>
<dbReference type="RefSeq" id="NP_999464.1">
    <property type="nucleotide sequence ID" value="NM_214299.1"/>
</dbReference>
<dbReference type="RefSeq" id="XP_020937150.1">
    <property type="nucleotide sequence ID" value="XM_021081491.1"/>
</dbReference>
<dbReference type="SMR" id="Q01580"/>
<dbReference type="FunCoup" id="Q01580">
    <property type="interactions" value="230"/>
</dbReference>
<dbReference type="MINT" id="Q01580"/>
<dbReference type="STRING" id="9823.ENSSSCP00000060087"/>
<dbReference type="GlyCosmos" id="Q01580">
    <property type="glycosylation" value="1 site, No reported glycans"/>
</dbReference>
<dbReference type="GlyGen" id="Q01580">
    <property type="glycosylation" value="1 site"/>
</dbReference>
<dbReference type="PaxDb" id="9823-ENSSSCP00000015279"/>
<dbReference type="Ensembl" id="ENSSSCT00000015692.4">
    <property type="protein sequence ID" value="ENSSSCP00000015279.2"/>
    <property type="gene ID" value="ENSSSCG00000014362.5"/>
</dbReference>
<dbReference type="Ensembl" id="ENSSSCT00015005594.1">
    <property type="protein sequence ID" value="ENSSSCP00015002232.1"/>
    <property type="gene ID" value="ENSSSCG00015004214.1"/>
</dbReference>
<dbReference type="Ensembl" id="ENSSSCT00025065260.1">
    <property type="protein sequence ID" value="ENSSSCP00025027827.1"/>
    <property type="gene ID" value="ENSSSCG00025047977.1"/>
</dbReference>
<dbReference type="Ensembl" id="ENSSSCT00030045257.1">
    <property type="protein sequence ID" value="ENSSSCP00030020347.1"/>
    <property type="gene ID" value="ENSSSCG00030032732.1"/>
</dbReference>
<dbReference type="Ensembl" id="ENSSSCT00035103018.1">
    <property type="protein sequence ID" value="ENSSSCP00035044010.1"/>
    <property type="gene ID" value="ENSSSCG00035075778.1"/>
</dbReference>
<dbReference type="Ensembl" id="ENSSSCT00040085561.1">
    <property type="protein sequence ID" value="ENSSSCP00040037443.1"/>
    <property type="gene ID" value="ENSSSCG00040062792.1"/>
</dbReference>
<dbReference type="Ensembl" id="ENSSSCT00055006535.1">
    <property type="protein sequence ID" value="ENSSSCP00055005145.1"/>
    <property type="gene ID" value="ENSSSCG00055003344.1"/>
</dbReference>
<dbReference type="Ensembl" id="ENSSSCT00060014326.1">
    <property type="protein sequence ID" value="ENSSSCP00060005558.1"/>
    <property type="gene ID" value="ENSSSCG00060010975.1"/>
</dbReference>
<dbReference type="Ensembl" id="ENSSSCT00065071021.1">
    <property type="protein sequence ID" value="ENSSSCP00065030954.1"/>
    <property type="gene ID" value="ENSSSCG00065051871.1"/>
</dbReference>
<dbReference type="Ensembl" id="ENSSSCT00070000161.1">
    <property type="protein sequence ID" value="ENSSSCP00070000130.1"/>
    <property type="gene ID" value="ENSSSCG00070000111.1"/>
</dbReference>
<dbReference type="Ensembl" id="ENSSSCT00085037419">
    <property type="protein sequence ID" value="ENSSSCP00085025986"/>
    <property type="gene ID" value="ENSSSCG00085019629"/>
</dbReference>
<dbReference type="Ensembl" id="ENSSSCT00090057666">
    <property type="protein sequence ID" value="ENSSSCP00090035963"/>
    <property type="gene ID" value="ENSSSCG00090032605"/>
</dbReference>
<dbReference type="Ensembl" id="ENSSSCT00105057787">
    <property type="protein sequence ID" value="ENSSSCP00105040806"/>
    <property type="gene ID" value="ENSSSCG00105030412"/>
</dbReference>
<dbReference type="Ensembl" id="ENSSSCT00110022052">
    <property type="protein sequence ID" value="ENSSSCP00110014896"/>
    <property type="gene ID" value="ENSSSCG00110011494"/>
</dbReference>
<dbReference type="Ensembl" id="ENSSSCT00115036603">
    <property type="protein sequence ID" value="ENSSSCP00115034654"/>
    <property type="gene ID" value="ENSSSCG00115020660"/>
</dbReference>
<dbReference type="Ensembl" id="ENSSSCT00130068861">
    <property type="protein sequence ID" value="ENSSSCP00130049528"/>
    <property type="gene ID" value="ENSSSCG00130035228"/>
</dbReference>
<dbReference type="GeneID" id="397564"/>
<dbReference type="KEGG" id="ssc:397564"/>
<dbReference type="CTD" id="1839"/>
<dbReference type="VGNC" id="VGNC:88792">
    <property type="gene designation" value="HBEGF"/>
</dbReference>
<dbReference type="eggNOG" id="ENOG502S0ZP">
    <property type="taxonomic scope" value="Eukaryota"/>
</dbReference>
<dbReference type="GeneTree" id="ENSGT00940000156901"/>
<dbReference type="HOGENOM" id="CLU_096527_2_0_1"/>
<dbReference type="InParanoid" id="Q01580"/>
<dbReference type="OMA" id="PSCICQE"/>
<dbReference type="OrthoDB" id="8780145at2759"/>
<dbReference type="Reactome" id="R-SSC-1227986">
    <property type="pathway name" value="Signaling by ERBB2"/>
</dbReference>
<dbReference type="Reactome" id="R-SSC-1236394">
    <property type="pathway name" value="Signaling by ERBB4"/>
</dbReference>
<dbReference type="Reactome" id="R-SSC-1250196">
    <property type="pathway name" value="SHC1 events in ERBB2 signaling"/>
</dbReference>
<dbReference type="Reactome" id="R-SSC-1250342">
    <property type="pathway name" value="PI3K events in ERBB4 signaling"/>
</dbReference>
<dbReference type="Reactome" id="R-SSC-1250347">
    <property type="pathway name" value="SHC1 events in ERBB4 signaling"/>
</dbReference>
<dbReference type="Reactome" id="R-SSC-1257604">
    <property type="pathway name" value="PIP3 activates AKT signaling"/>
</dbReference>
<dbReference type="Reactome" id="R-SSC-177929">
    <property type="pathway name" value="Signaling by EGFR"/>
</dbReference>
<dbReference type="Reactome" id="R-SSC-179812">
    <property type="pathway name" value="GRB2 events in EGFR signaling"/>
</dbReference>
<dbReference type="Reactome" id="R-SSC-180292">
    <property type="pathway name" value="GAB1 signalosome"/>
</dbReference>
<dbReference type="Reactome" id="R-SSC-180336">
    <property type="pathway name" value="SHC1 events in EGFR signaling"/>
</dbReference>
<dbReference type="Reactome" id="R-SSC-182971">
    <property type="pathway name" value="EGFR downregulation"/>
</dbReference>
<dbReference type="Reactome" id="R-SSC-1963640">
    <property type="pathway name" value="GRB2 events in ERBB2 signaling"/>
</dbReference>
<dbReference type="Reactome" id="R-SSC-1963642">
    <property type="pathway name" value="PI3K events in ERBB2 signaling"/>
</dbReference>
<dbReference type="Reactome" id="R-SSC-212718">
    <property type="pathway name" value="EGFR interacts with phospholipase C-gamma"/>
</dbReference>
<dbReference type="Reactome" id="R-SSC-2179392">
    <property type="pathway name" value="EGFR Transactivation by Gastrin"/>
</dbReference>
<dbReference type="Reactome" id="R-SSC-5673001">
    <property type="pathway name" value="RAF/MAP kinase cascade"/>
</dbReference>
<dbReference type="Reactome" id="R-SSC-6785631">
    <property type="pathway name" value="ERBB2 Regulates Cell Motility"/>
</dbReference>
<dbReference type="Reactome" id="R-SSC-6811558">
    <property type="pathway name" value="PI5P, PP2A and IER3 Regulate PI3K/AKT Signaling"/>
</dbReference>
<dbReference type="Reactome" id="R-SSC-8847993">
    <property type="pathway name" value="ERBB2 Activates PTK6 Signaling"/>
</dbReference>
<dbReference type="Reactome" id="R-SSC-8856825">
    <property type="pathway name" value="Cargo recognition for clathrin-mediated endocytosis"/>
</dbReference>
<dbReference type="Reactome" id="R-SSC-8856828">
    <property type="pathway name" value="Clathrin-mediated endocytosis"/>
</dbReference>
<dbReference type="Reactome" id="R-SSC-8857538">
    <property type="pathway name" value="PTK6 promotes HIF1A stabilization"/>
</dbReference>
<dbReference type="Reactome" id="R-SSC-8863795">
    <property type="pathway name" value="Downregulation of ERBB2 signaling"/>
</dbReference>
<dbReference type="Reactome" id="R-SSC-9009391">
    <property type="pathway name" value="Extra-nuclear estrogen signaling"/>
</dbReference>
<dbReference type="Proteomes" id="UP000008227">
    <property type="component" value="Chromosome 2"/>
</dbReference>
<dbReference type="Proteomes" id="UP000314985">
    <property type="component" value="Chromosome 2"/>
</dbReference>
<dbReference type="Proteomes" id="UP000694570">
    <property type="component" value="Unplaced"/>
</dbReference>
<dbReference type="Proteomes" id="UP000694571">
    <property type="component" value="Unplaced"/>
</dbReference>
<dbReference type="Proteomes" id="UP000694720">
    <property type="component" value="Unplaced"/>
</dbReference>
<dbReference type="Proteomes" id="UP000694722">
    <property type="component" value="Unplaced"/>
</dbReference>
<dbReference type="Proteomes" id="UP000694723">
    <property type="component" value="Unplaced"/>
</dbReference>
<dbReference type="Proteomes" id="UP000694724">
    <property type="component" value="Unplaced"/>
</dbReference>
<dbReference type="Proteomes" id="UP000694725">
    <property type="component" value="Unplaced"/>
</dbReference>
<dbReference type="Proteomes" id="UP000694726">
    <property type="component" value="Unplaced"/>
</dbReference>
<dbReference type="Proteomes" id="UP000694727">
    <property type="component" value="Unplaced"/>
</dbReference>
<dbReference type="Proteomes" id="UP000694728">
    <property type="component" value="Unplaced"/>
</dbReference>
<dbReference type="Bgee" id="ENSSSCG00000014362">
    <property type="expression patterns" value="Expressed in longissimus lumborum muscle and 41 other cell types or tissues"/>
</dbReference>
<dbReference type="ExpressionAtlas" id="Q01580">
    <property type="expression patterns" value="baseline and differential"/>
</dbReference>
<dbReference type="GO" id="GO:0009986">
    <property type="term" value="C:cell surface"/>
    <property type="evidence" value="ECO:0007669"/>
    <property type="project" value="Ensembl"/>
</dbReference>
<dbReference type="GO" id="GO:0005615">
    <property type="term" value="C:extracellular space"/>
    <property type="evidence" value="ECO:0000318"/>
    <property type="project" value="GO_Central"/>
</dbReference>
<dbReference type="GO" id="GO:0005886">
    <property type="term" value="C:plasma membrane"/>
    <property type="evidence" value="ECO:0000318"/>
    <property type="project" value="GO_Central"/>
</dbReference>
<dbReference type="GO" id="GO:0005154">
    <property type="term" value="F:epidermal growth factor receptor binding"/>
    <property type="evidence" value="ECO:0000318"/>
    <property type="project" value="GO_Central"/>
</dbReference>
<dbReference type="GO" id="GO:0008083">
    <property type="term" value="F:growth factor activity"/>
    <property type="evidence" value="ECO:0000318"/>
    <property type="project" value="GO_Central"/>
</dbReference>
<dbReference type="GO" id="GO:0008201">
    <property type="term" value="F:heparin binding"/>
    <property type="evidence" value="ECO:0000318"/>
    <property type="project" value="GO_Central"/>
</dbReference>
<dbReference type="GO" id="GO:0030297">
    <property type="term" value="F:transmembrane receptor protein tyrosine kinase activator activity"/>
    <property type="evidence" value="ECO:0007669"/>
    <property type="project" value="Ensembl"/>
</dbReference>
<dbReference type="GO" id="GO:0060326">
    <property type="term" value="P:cell chemotaxis"/>
    <property type="evidence" value="ECO:0007669"/>
    <property type="project" value="Ensembl"/>
</dbReference>
<dbReference type="GO" id="GO:0007173">
    <property type="term" value="P:epidermal growth factor receptor signaling pathway"/>
    <property type="evidence" value="ECO:0000318"/>
    <property type="project" value="GO_Central"/>
</dbReference>
<dbReference type="GO" id="GO:0038134">
    <property type="term" value="P:ERBB2-EGFR signaling pathway"/>
    <property type="evidence" value="ECO:0007669"/>
    <property type="project" value="Ensembl"/>
</dbReference>
<dbReference type="GO" id="GO:0038135">
    <property type="term" value="P:ERBB2-ERBB4 signaling pathway"/>
    <property type="evidence" value="ECO:0007669"/>
    <property type="project" value="Ensembl"/>
</dbReference>
<dbReference type="GO" id="GO:0008284">
    <property type="term" value="P:positive regulation of cell population proliferation"/>
    <property type="evidence" value="ECO:0000318"/>
    <property type="project" value="GO_Central"/>
</dbReference>
<dbReference type="GO" id="GO:0051549">
    <property type="term" value="P:positive regulation of keratinocyte migration"/>
    <property type="evidence" value="ECO:0007669"/>
    <property type="project" value="Ensembl"/>
</dbReference>
<dbReference type="GO" id="GO:0051897">
    <property type="term" value="P:positive regulation of phosphatidylinositol 3-kinase/protein kinase B signal transduction"/>
    <property type="evidence" value="ECO:0007669"/>
    <property type="project" value="Ensembl"/>
</dbReference>
<dbReference type="GO" id="GO:0048661">
    <property type="term" value="P:positive regulation of smooth muscle cell proliferation"/>
    <property type="evidence" value="ECO:0007669"/>
    <property type="project" value="Ensembl"/>
</dbReference>
<dbReference type="GO" id="GO:0090303">
    <property type="term" value="P:positive regulation of wound healing"/>
    <property type="evidence" value="ECO:0007669"/>
    <property type="project" value="Ensembl"/>
</dbReference>
<dbReference type="GO" id="GO:0008016">
    <property type="term" value="P:regulation of heart contraction"/>
    <property type="evidence" value="ECO:0007669"/>
    <property type="project" value="Ensembl"/>
</dbReference>
<dbReference type="GO" id="GO:0035313">
    <property type="term" value="P:wound healing, spreading of epidermal cells"/>
    <property type="evidence" value="ECO:0007669"/>
    <property type="project" value="Ensembl"/>
</dbReference>
<dbReference type="FunFam" id="2.10.25.10:FF:000158">
    <property type="entry name" value="proheparin-binding EGF-like growth factor"/>
    <property type="match status" value="1"/>
</dbReference>
<dbReference type="Gene3D" id="2.10.25.10">
    <property type="entry name" value="Laminin"/>
    <property type="match status" value="1"/>
</dbReference>
<dbReference type="InterPro" id="IPR000742">
    <property type="entry name" value="EGF-like_dom"/>
</dbReference>
<dbReference type="PANTHER" id="PTHR10740:SF4">
    <property type="entry name" value="PROHEPARIN-BINDING EGF-LIKE GROWTH FACTOR"/>
    <property type="match status" value="1"/>
</dbReference>
<dbReference type="PANTHER" id="PTHR10740">
    <property type="entry name" value="TRANSFORMING GROWTH FACTOR ALPHA"/>
    <property type="match status" value="1"/>
</dbReference>
<dbReference type="SUPFAM" id="SSF57196">
    <property type="entry name" value="EGF/Laminin"/>
    <property type="match status" value="1"/>
</dbReference>
<dbReference type="PROSITE" id="PS00022">
    <property type="entry name" value="EGF_1"/>
    <property type="match status" value="1"/>
</dbReference>
<dbReference type="PROSITE" id="PS01186">
    <property type="entry name" value="EGF_2"/>
    <property type="match status" value="1"/>
</dbReference>
<dbReference type="PROSITE" id="PS50026">
    <property type="entry name" value="EGF_3"/>
    <property type="match status" value="1"/>
</dbReference>
<reference key="1">
    <citation type="submission" date="1997-11" db="EMBL/GenBank/DDBJ databases">
        <authorList>
            <person name="Pascall J.C."/>
        </authorList>
    </citation>
    <scope>NUCLEOTIDE SEQUENCE [MRNA]</scope>
</reference>
<reference key="2">
    <citation type="journal article" date="1992" name="Biochem. J.">
        <title>Tissue distribution of mRNA for heparin-binding epidermal growth factor.</title>
        <authorList>
            <person name="Vaughan T.J."/>
            <person name="Pascall J.C."/>
            <person name="Brown K.D."/>
        </authorList>
    </citation>
    <scope>NUCLEOTIDE SEQUENCE [MRNA] OF 99-182</scope>
    <source>
        <strain>Large white</strain>
        <tissue>Heart</tissue>
    </source>
</reference>